<reference key="1">
    <citation type="journal article" date="2009" name="PLoS Biol.">
        <title>Lineage-specific biology revealed by a finished genome assembly of the mouse.</title>
        <authorList>
            <person name="Church D.M."/>
            <person name="Goodstadt L."/>
            <person name="Hillier L.W."/>
            <person name="Zody M.C."/>
            <person name="Goldstein S."/>
            <person name="She X."/>
            <person name="Bult C.J."/>
            <person name="Agarwala R."/>
            <person name="Cherry J.L."/>
            <person name="DiCuccio M."/>
            <person name="Hlavina W."/>
            <person name="Kapustin Y."/>
            <person name="Meric P."/>
            <person name="Maglott D."/>
            <person name="Birtle Z."/>
            <person name="Marques A.C."/>
            <person name="Graves T."/>
            <person name="Zhou S."/>
            <person name="Teague B."/>
            <person name="Potamousis K."/>
            <person name="Churas C."/>
            <person name="Place M."/>
            <person name="Herschleb J."/>
            <person name="Runnheim R."/>
            <person name="Forrest D."/>
            <person name="Amos-Landgraf J."/>
            <person name="Schwartz D.C."/>
            <person name="Cheng Z."/>
            <person name="Lindblad-Toh K."/>
            <person name="Eichler E.E."/>
            <person name="Ponting C.P."/>
        </authorList>
    </citation>
    <scope>NUCLEOTIDE SEQUENCE [LARGE SCALE GENOMIC DNA]</scope>
    <source>
        <strain>C57BL/6J</strain>
    </source>
</reference>
<reference key="2">
    <citation type="journal article" date="2004" name="Genome Res.">
        <title>The status, quality, and expansion of the NIH full-length cDNA project: the Mammalian Gene Collection (MGC).</title>
        <authorList>
            <consortium name="The MGC Project Team"/>
        </authorList>
    </citation>
    <scope>NUCLEOTIDE SEQUENCE [LARGE SCALE MRNA]</scope>
</reference>
<feature type="chain" id="PRO_0000434566" description="Protein FAM83C">
    <location>
        <begin position="1"/>
        <end position="776"/>
    </location>
</feature>
<feature type="region of interest" description="DUF1669" evidence="1">
    <location>
        <begin position="1"/>
        <end position="340"/>
    </location>
</feature>
<feature type="region of interest" description="Disordered" evidence="2">
    <location>
        <begin position="344"/>
        <end position="467"/>
    </location>
</feature>
<feature type="region of interest" description="Disordered" evidence="2">
    <location>
        <begin position="494"/>
        <end position="565"/>
    </location>
</feature>
<feature type="region of interest" description="Disordered" evidence="2">
    <location>
        <begin position="617"/>
        <end position="653"/>
    </location>
</feature>
<feature type="region of interest" description="Disordered" evidence="2">
    <location>
        <begin position="669"/>
        <end position="694"/>
    </location>
</feature>
<feature type="region of interest" description="Disordered" evidence="2">
    <location>
        <begin position="716"/>
        <end position="745"/>
    </location>
</feature>
<feature type="compositionally biased region" description="Low complexity" evidence="2">
    <location>
        <begin position="368"/>
        <end position="385"/>
    </location>
</feature>
<feature type="compositionally biased region" description="Polar residues" evidence="2">
    <location>
        <begin position="452"/>
        <end position="467"/>
    </location>
</feature>
<feature type="compositionally biased region" description="Basic and acidic residues" evidence="2">
    <location>
        <begin position="523"/>
        <end position="539"/>
    </location>
</feature>
<feature type="compositionally biased region" description="Polar residues" evidence="2">
    <location>
        <begin position="554"/>
        <end position="563"/>
    </location>
</feature>
<feature type="sequence conflict" description="In Ref. 2; AAI13191/AAI13798." evidence="3" ref="2">
    <original>S</original>
    <variation>G</variation>
    <location>
        <position position="343"/>
    </location>
</feature>
<feature type="sequence conflict" description="In Ref. 2; AAI13191/AAI13798." evidence="3" ref="2">
    <original>A</original>
    <variation>V</variation>
    <location>
        <position position="546"/>
    </location>
</feature>
<feature type="sequence conflict" description="In Ref. 2; AAI13191/AAI13798." evidence="3" ref="2">
    <original>R</original>
    <variation>G</variation>
    <location>
        <position position="566"/>
    </location>
</feature>
<feature type="sequence conflict" description="In Ref. 2; AAI13191/AAI13798." evidence="3" ref="2">
    <original>I</original>
    <variation>M</variation>
    <location>
        <position position="634"/>
    </location>
</feature>
<proteinExistence type="evidence at transcript level"/>
<protein>
    <recommendedName>
        <fullName evidence="3">Protein FAM83C</fullName>
    </recommendedName>
</protein>
<organism>
    <name type="scientific">Mus musculus</name>
    <name type="common">Mouse</name>
    <dbReference type="NCBI Taxonomy" id="10090"/>
    <lineage>
        <taxon>Eukaryota</taxon>
        <taxon>Metazoa</taxon>
        <taxon>Chordata</taxon>
        <taxon>Craniata</taxon>
        <taxon>Vertebrata</taxon>
        <taxon>Euteleostomi</taxon>
        <taxon>Mammalia</taxon>
        <taxon>Eutheria</taxon>
        <taxon>Euarchontoglires</taxon>
        <taxon>Glires</taxon>
        <taxon>Rodentia</taxon>
        <taxon>Myomorpha</taxon>
        <taxon>Muroidea</taxon>
        <taxon>Muridae</taxon>
        <taxon>Murinae</taxon>
        <taxon>Mus</taxon>
        <taxon>Mus</taxon>
    </lineage>
</organism>
<gene>
    <name evidence="4" type="primary">Fam83c</name>
</gene>
<dbReference type="EMBL" id="AL845445">
    <property type="status" value="NOT_ANNOTATED_CDS"/>
    <property type="molecule type" value="Genomic_DNA"/>
</dbReference>
<dbReference type="EMBL" id="BC113190">
    <property type="protein sequence ID" value="AAI13191.1"/>
    <property type="status" value="ALT_INIT"/>
    <property type="molecule type" value="mRNA"/>
</dbReference>
<dbReference type="EMBL" id="BC113797">
    <property type="protein sequence ID" value="AAI13798.1"/>
    <property type="status" value="ALT_INIT"/>
    <property type="molecule type" value="mRNA"/>
</dbReference>
<dbReference type="RefSeq" id="NP_082064.2">
    <property type="nucleotide sequence ID" value="NM_027788.2"/>
</dbReference>
<dbReference type="SMR" id="A2ARK0"/>
<dbReference type="FunCoup" id="A2ARK0">
    <property type="interactions" value="13"/>
</dbReference>
<dbReference type="STRING" id="10090.ENSMUSP00000029143"/>
<dbReference type="iPTMnet" id="A2ARK0"/>
<dbReference type="PhosphoSitePlus" id="A2ARK0"/>
<dbReference type="PaxDb" id="10090-ENSMUSP00000029143"/>
<dbReference type="ProteomicsDB" id="277031"/>
<dbReference type="Antibodypedia" id="74559">
    <property type="antibodies" value="7 antibodies from 6 providers"/>
</dbReference>
<dbReference type="Ensembl" id="ENSMUST00000239423.2">
    <property type="protein sequence ID" value="ENSMUSP00000159338.2"/>
    <property type="gene ID" value="ENSMUSG00000074647.5"/>
</dbReference>
<dbReference type="GeneID" id="71405"/>
<dbReference type="KEGG" id="mmu:71405"/>
<dbReference type="UCSC" id="uc008nlm.2">
    <property type="organism name" value="mouse"/>
</dbReference>
<dbReference type="AGR" id="MGI:1918655"/>
<dbReference type="CTD" id="128876"/>
<dbReference type="MGI" id="MGI:1918655">
    <property type="gene designation" value="Fam83c"/>
</dbReference>
<dbReference type="VEuPathDB" id="HostDB:ENSMUSG00000074647"/>
<dbReference type="eggNOG" id="ENOG502QQ4N">
    <property type="taxonomic scope" value="Eukaryota"/>
</dbReference>
<dbReference type="GeneTree" id="ENSGT00940000160254"/>
<dbReference type="HOGENOM" id="CLU_020214_0_0_1"/>
<dbReference type="InParanoid" id="A2ARK0"/>
<dbReference type="OMA" id="DYMTSHV"/>
<dbReference type="OrthoDB" id="9944987at2759"/>
<dbReference type="PhylomeDB" id="A2ARK0"/>
<dbReference type="TreeFam" id="TF330777"/>
<dbReference type="BioGRID-ORCS" id="71405">
    <property type="hits" value="0 hits in 75 CRISPR screens"/>
</dbReference>
<dbReference type="ChiTaRS" id="Fam83c">
    <property type="organism name" value="mouse"/>
</dbReference>
<dbReference type="PRO" id="PR:A2ARK0"/>
<dbReference type="Proteomes" id="UP000000589">
    <property type="component" value="Chromosome 2"/>
</dbReference>
<dbReference type="RNAct" id="A2ARK0">
    <property type="molecule type" value="protein"/>
</dbReference>
<dbReference type="Bgee" id="ENSMUSG00000074647">
    <property type="expression patterns" value="Expressed in lip and 20 other cell types or tissues"/>
</dbReference>
<dbReference type="ExpressionAtlas" id="A2ARK0">
    <property type="expression patterns" value="baseline and differential"/>
</dbReference>
<dbReference type="GO" id="GO:0019901">
    <property type="term" value="F:protein kinase binding"/>
    <property type="evidence" value="ECO:0007669"/>
    <property type="project" value="Ensembl"/>
</dbReference>
<dbReference type="FunFam" id="3.30.870.10:FF:000004">
    <property type="entry name" value="protein FAM83H isoform X2"/>
    <property type="match status" value="1"/>
</dbReference>
<dbReference type="Gene3D" id="3.30.870.10">
    <property type="entry name" value="Endonuclease Chain A"/>
    <property type="match status" value="1"/>
</dbReference>
<dbReference type="InterPro" id="IPR050944">
    <property type="entry name" value="FAM83"/>
</dbReference>
<dbReference type="InterPro" id="IPR012461">
    <property type="entry name" value="SACK1"/>
</dbReference>
<dbReference type="PANTHER" id="PTHR16181">
    <property type="entry name" value="PROTEIN FAM83A-RELATED"/>
    <property type="match status" value="1"/>
</dbReference>
<dbReference type="PANTHER" id="PTHR16181:SF29">
    <property type="entry name" value="PROTEIN FAM83A-RELATED"/>
    <property type="match status" value="1"/>
</dbReference>
<dbReference type="Pfam" id="PF07894">
    <property type="entry name" value="SACK1"/>
    <property type="match status" value="1"/>
</dbReference>
<dbReference type="SUPFAM" id="SSF56024">
    <property type="entry name" value="Phospholipase D/nuclease"/>
    <property type="match status" value="1"/>
</dbReference>
<accession>A2ARK0</accession>
<accession>Q14CG2</accession>
<comment type="function">
    <text evidence="1">May play a role in MAPK signaling.</text>
</comment>
<comment type="subunit">
    <text evidence="1">Directly interacts (via DUF1669) with CSNK1A1 and CSNK1A1L (By similarity). May interact with RAF1.</text>
</comment>
<comment type="subcellular location">
    <subcellularLocation>
        <location evidence="1">Cytoplasm</location>
    </subcellularLocation>
    <text evidence="1">Displays distinct fibrous patterns in the cytoplasm and in the vicinity of membrane ruffles. In the presence of CSNK1A1, localizes along fibrous structures.</text>
</comment>
<comment type="domain">
    <text evidence="1">All members of the FAM83 family of proteins share a conserved N-terminal DUF1669 (domain of unknown function 1669) domain of about 300 amino acids. This domain mediates the interaction with casein kinase 1 (CK1) isoforms. Therefore, it has been proposed to rename DUF1669 the polypeptide anchor of CK1 domain.</text>
</comment>
<comment type="PTM">
    <text evidence="1">Phosphorylated by CSNK1A1.</text>
</comment>
<comment type="similarity">
    <text evidence="3">Belongs to the FAM83 family.</text>
</comment>
<comment type="caution">
    <text evidence="3">It is uncertain whether Met-1 or Met-47 is the initiator.</text>
</comment>
<comment type="sequence caution" evidence="3">
    <conflict type="erroneous initiation">
        <sequence resource="EMBL-CDS" id="AAI13191"/>
    </conflict>
    <text>Truncated N-terminus.</text>
</comment>
<comment type="sequence caution" evidence="3">
    <conflict type="erroneous initiation">
        <sequence resource="EMBL-CDS" id="AAI13798"/>
    </conflict>
    <text>Truncated N-terminus.</text>
</comment>
<name>FA83C_MOUSE</name>
<evidence type="ECO:0000250" key="1">
    <source>
        <dbReference type="UniProtKB" id="Q9BQN1"/>
    </source>
</evidence>
<evidence type="ECO:0000256" key="2">
    <source>
        <dbReference type="SAM" id="MobiDB-lite"/>
    </source>
</evidence>
<evidence type="ECO:0000305" key="3"/>
<evidence type="ECO:0000312" key="4">
    <source>
        <dbReference type="MGI" id="MGI:1918655"/>
    </source>
</evidence>
<keyword id="KW-0963">Cytoplasm</keyword>
<keyword id="KW-1185">Reference proteome</keyword>
<sequence length="776" mass="84071">MQGCQAGASIFFLIAANPDANHGASGGLGSRWIRTFSRIAPAGTQGMAGPLRSRVEELKRPWWRESSPLVLQHSEAARLAADALLERGEAAYLQVISEERELPFLSALDVDYMISHVRGVPELSEAQGSETLGQDLSMLSEVTSGTYFPMASDLDPPDLDLGWPEVPQATGFSPTQAVVHFQRDKGKSIKDLLRFLFSQAQTVVAVVMDVFTDMELLCDLMEASSRRGVPVYLLLAQEHLKYFLEMCYKMDLNGGHLVNMRVRSTCGDTYCSKAGRRFTGQALEKFVIIDCEQVVAGSYSFTWLCSQAHTSMVLQLRGHIVEDFDREFRCLYAESQPVEGFCSNEDPLMPQVPRPPPVTLAFGPAVPSATGSSPSSNSLSSIKHSPLLARSSYLALPGGGGRNDMGMGSSSPGPAYHEAGGQPSLYRQLSDPNHISPPGPYRANLSKLGASPWSQSSPALNHSSTSPLTLAVGSPLLPSSRPLLHFTRGVPALSRLPENGLPASQDPSLPRGRWVPGTALETVEEKKVSLSQSHDHLDRLSPFSKAGEAGGPNSRVTPDSSSLQHRELALDDRRLSLSHSHSQLDLLSQGQGVLESGSLRPGELSLENRKLSLNHNHGQLDLLPQNPKPQAPKIPSDAYSSAGPSKPSLDDRRQTLGHSQLDLITKFGPFRSEGPGPSCPPEPSPVRMAGVGSADEKRLTLGHSKLDLITKYHQLQGARQKPEPGIPGAPVSGHQNGSSNDLFAPEKRLTLGHSKLDLITKYNKSKFKQLRSRFES</sequence>